<feature type="chain" id="PRO_0000053605" description="COUP transcription factor 2">
    <location>
        <begin position="1"/>
        <end position="414"/>
    </location>
</feature>
<feature type="domain" description="NR LBD" evidence="4">
    <location>
        <begin position="177"/>
        <end position="403"/>
    </location>
</feature>
<feature type="DNA-binding region" description="Nuclear receptor" evidence="3">
    <location>
        <begin position="76"/>
        <end position="151"/>
    </location>
</feature>
<feature type="zinc finger region" description="NR C4-type" evidence="3">
    <location>
        <begin position="79"/>
        <end position="99"/>
    </location>
</feature>
<feature type="zinc finger region" description="NR C4-type" evidence="3">
    <location>
        <begin position="115"/>
        <end position="139"/>
    </location>
</feature>
<feature type="region of interest" description="Disordered" evidence="5">
    <location>
        <begin position="1"/>
        <end position="72"/>
    </location>
</feature>
<feature type="region of interest" description="Interaction with ZFPM2" evidence="1">
    <location>
        <begin position="117"/>
        <end position="414"/>
    </location>
</feature>
<feature type="region of interest" description="Important for dimerization" evidence="1">
    <location>
        <begin position="337"/>
        <end position="414"/>
    </location>
</feature>
<feature type="compositionally biased region" description="Pro residues" evidence="5">
    <location>
        <begin position="27"/>
        <end position="37"/>
    </location>
</feature>
<feature type="compositionally biased region" description="Low complexity" evidence="5">
    <location>
        <begin position="38"/>
        <end position="57"/>
    </location>
</feature>
<feature type="compositionally biased region" description="Gly residues" evidence="5">
    <location>
        <begin position="58"/>
        <end position="67"/>
    </location>
</feature>
<feature type="modified residue" description="Phosphothreonine" evidence="2">
    <location>
        <position position="51"/>
    </location>
</feature>
<proteinExistence type="evidence at transcript level"/>
<keyword id="KW-0010">Activator</keyword>
<keyword id="KW-0238">DNA-binding</keyword>
<keyword id="KW-0479">Metal-binding</keyword>
<keyword id="KW-0539">Nucleus</keyword>
<keyword id="KW-0597">Phosphoprotein</keyword>
<keyword id="KW-0675">Receptor</keyword>
<keyword id="KW-1185">Reference proteome</keyword>
<keyword id="KW-0804">Transcription</keyword>
<keyword id="KW-0805">Transcription regulation</keyword>
<keyword id="KW-0862">Zinc</keyword>
<keyword id="KW-0863">Zinc-finger</keyword>
<comment type="function">
    <text evidence="2">Ligand-activated transcription factor. Activated by high concentrations of 9-cis-retinoic acid and all-trans-retinoic acid, but not by dexamethasone, cortisol or progesterone (in vitro). Regulation of the apolipoprotein A-I gene transcription. Binds to DNA site A. May be required to establish ovary identity during early gonad development.</text>
</comment>
<comment type="subunit">
    <text evidence="1">Interacts with SQSTM1. Binds DNA as a dimer; homodimer or heterodimer with NR2F6. Interacts with NCOA1, NCOA2, NCOA3 and PPARGC1A. Interacts with ZFPM2 (By similarity).</text>
</comment>
<comment type="subcellular location">
    <subcellularLocation>
        <location>Nucleus</location>
    </subcellularLocation>
</comment>
<comment type="similarity">
    <text evidence="6">Belongs to the nuclear hormone receptor family. NR2 subfamily.</text>
</comment>
<organism>
    <name type="scientific">Bos taurus</name>
    <name type="common">Bovine</name>
    <dbReference type="NCBI Taxonomy" id="9913"/>
    <lineage>
        <taxon>Eukaryota</taxon>
        <taxon>Metazoa</taxon>
        <taxon>Chordata</taxon>
        <taxon>Craniata</taxon>
        <taxon>Vertebrata</taxon>
        <taxon>Euteleostomi</taxon>
        <taxon>Mammalia</taxon>
        <taxon>Eutheria</taxon>
        <taxon>Laurasiatheria</taxon>
        <taxon>Artiodactyla</taxon>
        <taxon>Ruminantia</taxon>
        <taxon>Pecora</taxon>
        <taxon>Bovidae</taxon>
        <taxon>Bovinae</taxon>
        <taxon>Bos</taxon>
    </lineage>
</organism>
<accession>Q9TTR7</accession>
<accession>Q08DL8</accession>
<reference key="1">
    <citation type="submission" date="1999-09" db="EMBL/GenBank/DDBJ databases">
        <authorList>
            <person name="Walther N."/>
        </authorList>
    </citation>
    <scope>NUCLEOTIDE SEQUENCE [MRNA]</scope>
    <source>
        <tissue>Corpus luteum</tissue>
    </source>
</reference>
<reference key="2">
    <citation type="submission" date="2006-09" db="EMBL/GenBank/DDBJ databases">
        <authorList>
            <consortium name="NIH - Mammalian Gene Collection (MGC) project"/>
        </authorList>
    </citation>
    <scope>NUCLEOTIDE SEQUENCE [LARGE SCALE MRNA]</scope>
    <source>
        <strain>Hereford</strain>
        <tissue>Ascending colon</tissue>
    </source>
</reference>
<sequence length="414" mass="45557">MAMVVSTWRDPQDEVPGSQGSQASQAPPVPGPPPGAPHTPQTPGQGGPASTPAQTAAGGQGGPGGPGSDKQQQQQHIECVVCGDKSSGKHYGQFTCEGCKSFFKRSVRRNLSYTCRANRNCPIDQHHRNQCQYCRLKKCLKVGMRREAVQRGRMPPTQPSHGQFALTNGDPLNCHSYLSGYISLLLRAEPYPTSRFGSQCMQPNNIMGIENICELAARMLFSAVEWARNIPFFPDLQITDQVALLRLTWSELFVLNAAQCSMPLHVAPLLAAAGLHASPMSADRVVAFMDHIRIFQEQVEKLKALHVDSAEYSCLKAIVLFTSDACGLSDVAHVESLQEKSQCALEEYVRSQYPNQPTRFGKLLLRLPSLRTVSSSVIEQLFFVRLVGKTPIETLIRDMLLSGSSFNWPYMAIQ</sequence>
<dbReference type="EMBL" id="AJ249441">
    <property type="protein sequence ID" value="CAB55624.1"/>
    <property type="molecule type" value="mRNA"/>
</dbReference>
<dbReference type="EMBL" id="BC123677">
    <property type="protein sequence ID" value="AAI23678.1"/>
    <property type="molecule type" value="mRNA"/>
</dbReference>
<dbReference type="PIR" id="JH0787">
    <property type="entry name" value="JH0787"/>
</dbReference>
<dbReference type="RefSeq" id="NP_776827.1">
    <property type="nucleotide sequence ID" value="NM_174402.3"/>
</dbReference>
<dbReference type="RefSeq" id="XP_024837379.1">
    <property type="nucleotide sequence ID" value="XM_024981611.2"/>
</dbReference>
<dbReference type="SMR" id="Q9TTR7"/>
<dbReference type="FunCoup" id="Q9TTR7">
    <property type="interactions" value="473"/>
</dbReference>
<dbReference type="STRING" id="9913.ENSBTAP00000023969"/>
<dbReference type="PaxDb" id="9913-ENSBTAP00000023969"/>
<dbReference type="Ensembl" id="ENSBTAT00000023969.6">
    <property type="protein sequence ID" value="ENSBTAP00000023969.5"/>
    <property type="gene ID" value="ENSBTAG00000018007.7"/>
</dbReference>
<dbReference type="GeneID" id="281945"/>
<dbReference type="KEGG" id="bta:281945"/>
<dbReference type="CTD" id="7026"/>
<dbReference type="VEuPathDB" id="HostDB:ENSBTAG00000018007"/>
<dbReference type="VGNC" id="VGNC:32241">
    <property type="gene designation" value="NR2F2"/>
</dbReference>
<dbReference type="eggNOG" id="KOG3575">
    <property type="taxonomic scope" value="Eukaryota"/>
</dbReference>
<dbReference type="GeneTree" id="ENSGT00940000157540"/>
<dbReference type="InParanoid" id="Q9TTR7"/>
<dbReference type="OMA" id="QHIECTV"/>
<dbReference type="OrthoDB" id="5873264at2759"/>
<dbReference type="TreeFam" id="TF352097"/>
<dbReference type="Proteomes" id="UP000009136">
    <property type="component" value="Chromosome 21"/>
</dbReference>
<dbReference type="Bgee" id="ENSBTAG00000018007">
    <property type="expression patterns" value="Expressed in myometrium and 102 other cell types or tissues"/>
</dbReference>
<dbReference type="GO" id="GO:0005829">
    <property type="term" value="C:cytosol"/>
    <property type="evidence" value="ECO:0007669"/>
    <property type="project" value="Ensembl"/>
</dbReference>
<dbReference type="GO" id="GO:0005654">
    <property type="term" value="C:nucleoplasm"/>
    <property type="evidence" value="ECO:0007669"/>
    <property type="project" value="Ensembl"/>
</dbReference>
<dbReference type="GO" id="GO:0004879">
    <property type="term" value="F:nuclear receptor activity"/>
    <property type="evidence" value="ECO:0000250"/>
    <property type="project" value="UniProtKB"/>
</dbReference>
<dbReference type="GO" id="GO:0042803">
    <property type="term" value="F:protein homodimerization activity"/>
    <property type="evidence" value="ECO:0007669"/>
    <property type="project" value="Ensembl"/>
</dbReference>
<dbReference type="GO" id="GO:0001972">
    <property type="term" value="F:retinoic acid binding"/>
    <property type="evidence" value="ECO:0000250"/>
    <property type="project" value="UniProtKB"/>
</dbReference>
<dbReference type="GO" id="GO:0000978">
    <property type="term" value="F:RNA polymerase II cis-regulatory region sequence-specific DNA binding"/>
    <property type="evidence" value="ECO:0000318"/>
    <property type="project" value="GO_Central"/>
</dbReference>
<dbReference type="GO" id="GO:0008270">
    <property type="term" value="F:zinc ion binding"/>
    <property type="evidence" value="ECO:0007669"/>
    <property type="project" value="UniProtKB-KW"/>
</dbReference>
<dbReference type="GO" id="GO:0009952">
    <property type="term" value="P:anterior/posterior pattern specification"/>
    <property type="evidence" value="ECO:0007669"/>
    <property type="project" value="Ensembl"/>
</dbReference>
<dbReference type="GO" id="GO:0048514">
    <property type="term" value="P:blood vessel morphogenesis"/>
    <property type="evidence" value="ECO:0007669"/>
    <property type="project" value="Ensembl"/>
</dbReference>
<dbReference type="GO" id="GO:0030154">
    <property type="term" value="P:cell differentiation"/>
    <property type="evidence" value="ECO:0000318"/>
    <property type="project" value="GO_Central"/>
</dbReference>
<dbReference type="GO" id="GO:0008585">
    <property type="term" value="P:female gonad development"/>
    <property type="evidence" value="ECO:0000250"/>
    <property type="project" value="UniProtKB"/>
</dbReference>
<dbReference type="GO" id="GO:0009566">
    <property type="term" value="P:fertilization"/>
    <property type="evidence" value="ECO:0007669"/>
    <property type="project" value="Ensembl"/>
</dbReference>
<dbReference type="GO" id="GO:0030900">
    <property type="term" value="P:forebrain development"/>
    <property type="evidence" value="ECO:0007669"/>
    <property type="project" value="Ensembl"/>
</dbReference>
<dbReference type="GO" id="GO:1904936">
    <property type="term" value="P:interneuron migration"/>
    <property type="evidence" value="ECO:0007669"/>
    <property type="project" value="Ensembl"/>
</dbReference>
<dbReference type="GO" id="GO:0060838">
    <property type="term" value="P:lymphatic endothelial cell fate commitment"/>
    <property type="evidence" value="ECO:0007669"/>
    <property type="project" value="Ensembl"/>
</dbReference>
<dbReference type="GO" id="GO:0001893">
    <property type="term" value="P:maternal placenta development"/>
    <property type="evidence" value="ECO:0007669"/>
    <property type="project" value="Ensembl"/>
</dbReference>
<dbReference type="GO" id="GO:0010596">
    <property type="term" value="P:negative regulation of endothelial cell migration"/>
    <property type="evidence" value="ECO:0007669"/>
    <property type="project" value="Ensembl"/>
</dbReference>
<dbReference type="GO" id="GO:0001937">
    <property type="term" value="P:negative regulation of endothelial cell proliferation"/>
    <property type="evidence" value="ECO:0007669"/>
    <property type="project" value="Ensembl"/>
</dbReference>
<dbReference type="GO" id="GO:0000122">
    <property type="term" value="P:negative regulation of transcription by RNA polymerase II"/>
    <property type="evidence" value="ECO:0000318"/>
    <property type="project" value="GO_Central"/>
</dbReference>
<dbReference type="GO" id="GO:0007399">
    <property type="term" value="P:nervous system development"/>
    <property type="evidence" value="ECO:0000318"/>
    <property type="project" value="GO_Central"/>
</dbReference>
<dbReference type="GO" id="GO:0060674">
    <property type="term" value="P:placenta blood vessel development"/>
    <property type="evidence" value="ECO:0007669"/>
    <property type="project" value="Ensembl"/>
</dbReference>
<dbReference type="GO" id="GO:0045893">
    <property type="term" value="P:positive regulation of DNA-templated transcription"/>
    <property type="evidence" value="ECO:0000250"/>
    <property type="project" value="UniProtKB"/>
</dbReference>
<dbReference type="GO" id="GO:0045944">
    <property type="term" value="P:positive regulation of transcription by RNA polymerase II"/>
    <property type="evidence" value="ECO:0007669"/>
    <property type="project" value="Ensembl"/>
</dbReference>
<dbReference type="GO" id="GO:0009956">
    <property type="term" value="P:radial pattern formation"/>
    <property type="evidence" value="ECO:0007669"/>
    <property type="project" value="Ensembl"/>
</dbReference>
<dbReference type="GO" id="GO:0007519">
    <property type="term" value="P:skeletal muscle tissue development"/>
    <property type="evidence" value="ECO:0007669"/>
    <property type="project" value="Ensembl"/>
</dbReference>
<dbReference type="GO" id="GO:0060707">
    <property type="term" value="P:trophoblast giant cell differentiation"/>
    <property type="evidence" value="ECO:0007669"/>
    <property type="project" value="Ensembl"/>
</dbReference>
<dbReference type="CDD" id="cd06958">
    <property type="entry name" value="NR_DBD_COUP_TF"/>
    <property type="match status" value="1"/>
</dbReference>
<dbReference type="CDD" id="cd06948">
    <property type="entry name" value="NR_LBD_COUP-TF"/>
    <property type="match status" value="1"/>
</dbReference>
<dbReference type="FunFam" id="1.10.565.10:FF:000003">
    <property type="entry name" value="Coup transcription factor 2 isoform 1"/>
    <property type="match status" value="1"/>
</dbReference>
<dbReference type="FunFam" id="3.30.50.10:FF:000016">
    <property type="entry name" value="Nuclear receptor subfamily 2 group F member 1"/>
    <property type="match status" value="1"/>
</dbReference>
<dbReference type="Gene3D" id="3.30.50.10">
    <property type="entry name" value="Erythroid Transcription Factor GATA-1, subunit A"/>
    <property type="match status" value="1"/>
</dbReference>
<dbReference type="Gene3D" id="1.10.565.10">
    <property type="entry name" value="Retinoid X Receptor"/>
    <property type="match status" value="1"/>
</dbReference>
<dbReference type="InterPro" id="IPR035500">
    <property type="entry name" value="NHR-like_dom_sf"/>
</dbReference>
<dbReference type="InterPro" id="IPR000536">
    <property type="entry name" value="Nucl_hrmn_rcpt_lig-bd"/>
</dbReference>
<dbReference type="InterPro" id="IPR050274">
    <property type="entry name" value="Nuclear_hormone_rcpt_NR2"/>
</dbReference>
<dbReference type="InterPro" id="IPR001723">
    <property type="entry name" value="Nuclear_hrmn_rcpt"/>
</dbReference>
<dbReference type="InterPro" id="IPR001628">
    <property type="entry name" value="Znf_hrmn_rcpt"/>
</dbReference>
<dbReference type="InterPro" id="IPR013088">
    <property type="entry name" value="Znf_NHR/GATA"/>
</dbReference>
<dbReference type="PANTHER" id="PTHR24083">
    <property type="entry name" value="NUCLEAR HORMONE RECEPTOR"/>
    <property type="match status" value="1"/>
</dbReference>
<dbReference type="Pfam" id="PF00104">
    <property type="entry name" value="Hormone_recep"/>
    <property type="match status" value="1"/>
</dbReference>
<dbReference type="Pfam" id="PF00105">
    <property type="entry name" value="zf-C4"/>
    <property type="match status" value="1"/>
</dbReference>
<dbReference type="PRINTS" id="PR01282">
    <property type="entry name" value="COUPTNFACTOR"/>
</dbReference>
<dbReference type="PRINTS" id="PR00398">
    <property type="entry name" value="STRDHORMONER"/>
</dbReference>
<dbReference type="PRINTS" id="PR00047">
    <property type="entry name" value="STROIDFINGER"/>
</dbReference>
<dbReference type="SMART" id="SM00430">
    <property type="entry name" value="HOLI"/>
    <property type="match status" value="1"/>
</dbReference>
<dbReference type="SMART" id="SM00399">
    <property type="entry name" value="ZnF_C4"/>
    <property type="match status" value="1"/>
</dbReference>
<dbReference type="SUPFAM" id="SSF57716">
    <property type="entry name" value="Glucocorticoid receptor-like (DNA-binding domain)"/>
    <property type="match status" value="1"/>
</dbReference>
<dbReference type="SUPFAM" id="SSF48508">
    <property type="entry name" value="Nuclear receptor ligand-binding domain"/>
    <property type="match status" value="1"/>
</dbReference>
<dbReference type="PROSITE" id="PS51843">
    <property type="entry name" value="NR_LBD"/>
    <property type="match status" value="1"/>
</dbReference>
<dbReference type="PROSITE" id="PS00031">
    <property type="entry name" value="NUCLEAR_REC_DBD_1"/>
    <property type="match status" value="1"/>
</dbReference>
<dbReference type="PROSITE" id="PS51030">
    <property type="entry name" value="NUCLEAR_REC_DBD_2"/>
    <property type="match status" value="1"/>
</dbReference>
<gene>
    <name type="primary">NR2F2</name>
    <name type="synonym">TFCOUP2</name>
</gene>
<protein>
    <recommendedName>
        <fullName>COUP transcription factor 2</fullName>
        <shortName>COUP-TF2</shortName>
    </recommendedName>
    <alternativeName>
        <fullName>COUP transcription factor II</fullName>
        <shortName>COUP-TF II</shortName>
    </alternativeName>
    <alternativeName>
        <fullName>Nuclear receptor subfamily 2 group F member 2</fullName>
    </alternativeName>
</protein>
<name>COT2_BOVIN</name>
<evidence type="ECO:0000250" key="1"/>
<evidence type="ECO:0000250" key="2">
    <source>
        <dbReference type="UniProtKB" id="P24468"/>
    </source>
</evidence>
<evidence type="ECO:0000255" key="3">
    <source>
        <dbReference type="PROSITE-ProRule" id="PRU00407"/>
    </source>
</evidence>
<evidence type="ECO:0000255" key="4">
    <source>
        <dbReference type="PROSITE-ProRule" id="PRU01189"/>
    </source>
</evidence>
<evidence type="ECO:0000256" key="5">
    <source>
        <dbReference type="SAM" id="MobiDB-lite"/>
    </source>
</evidence>
<evidence type="ECO:0000305" key="6"/>